<name>MIND_CHLVU</name>
<reference key="1">
    <citation type="journal article" date="1997" name="Proc. Natl. Acad. Sci. U.S.A.">
        <title>Complete nucleotide sequence of the chloroplast genome from the green alga Chlorella vulgaris: the existence of genes possibly involved in chloroplast division.</title>
        <authorList>
            <person name="Wakasugi T."/>
            <person name="Nagai T."/>
            <person name="Kapoor M."/>
            <person name="Sugita M."/>
            <person name="Ito M."/>
            <person name="Ito S."/>
            <person name="Tsudzuki J."/>
            <person name="Nakashima K."/>
            <person name="Tsudzuki T."/>
            <person name="Suzuki Y."/>
            <person name="Hamada A."/>
            <person name="Ohta T."/>
            <person name="Inamura A."/>
            <person name="Yoshinaga K."/>
            <person name="Sugiura M."/>
        </authorList>
    </citation>
    <scope>NUCLEOTIDE SEQUENCE [LARGE SCALE GENOMIC DNA]</scope>
    <source>
        <strain>IAM C-27 / Tamiya</strain>
    </source>
</reference>
<geneLocation type="chloroplast"/>
<dbReference type="EMBL" id="AB001684">
    <property type="protein sequence ID" value="BAA57951.1"/>
    <property type="molecule type" value="Genomic_DNA"/>
</dbReference>
<dbReference type="PIR" id="T07303">
    <property type="entry name" value="T07303"/>
</dbReference>
<dbReference type="RefSeq" id="NP_045875.1">
    <property type="nucleotide sequence ID" value="NC_001865.1"/>
</dbReference>
<dbReference type="SMR" id="P56346"/>
<dbReference type="GeneID" id="809100"/>
<dbReference type="OrthoDB" id="189057at2759"/>
<dbReference type="GO" id="GO:0009507">
    <property type="term" value="C:chloroplast"/>
    <property type="evidence" value="ECO:0007669"/>
    <property type="project" value="UniProtKB-SubCell"/>
</dbReference>
<dbReference type="GO" id="GO:0009898">
    <property type="term" value="C:cytoplasmic side of plasma membrane"/>
    <property type="evidence" value="ECO:0007669"/>
    <property type="project" value="TreeGrafter"/>
</dbReference>
<dbReference type="GO" id="GO:0005829">
    <property type="term" value="C:cytosol"/>
    <property type="evidence" value="ECO:0007669"/>
    <property type="project" value="TreeGrafter"/>
</dbReference>
<dbReference type="GO" id="GO:0005524">
    <property type="term" value="F:ATP binding"/>
    <property type="evidence" value="ECO:0007669"/>
    <property type="project" value="UniProtKB-KW"/>
</dbReference>
<dbReference type="GO" id="GO:0016887">
    <property type="term" value="F:ATP hydrolysis activity"/>
    <property type="evidence" value="ECO:0007669"/>
    <property type="project" value="InterPro"/>
</dbReference>
<dbReference type="GO" id="GO:0051301">
    <property type="term" value="P:cell division"/>
    <property type="evidence" value="ECO:0007669"/>
    <property type="project" value="UniProtKB-KW"/>
</dbReference>
<dbReference type="GO" id="GO:0051782">
    <property type="term" value="P:negative regulation of cell division"/>
    <property type="evidence" value="ECO:0007669"/>
    <property type="project" value="TreeGrafter"/>
</dbReference>
<dbReference type="CDD" id="cd02036">
    <property type="entry name" value="MinD"/>
    <property type="match status" value="1"/>
</dbReference>
<dbReference type="FunFam" id="3.40.50.300:FF:000068">
    <property type="entry name" value="Site-determining protein"/>
    <property type="match status" value="1"/>
</dbReference>
<dbReference type="Gene3D" id="3.40.50.300">
    <property type="entry name" value="P-loop containing nucleotide triphosphate hydrolases"/>
    <property type="match status" value="1"/>
</dbReference>
<dbReference type="InterPro" id="IPR002586">
    <property type="entry name" value="CobQ/CobB/MinD/ParA_Nub-bd_dom"/>
</dbReference>
<dbReference type="InterPro" id="IPR010223">
    <property type="entry name" value="MinD"/>
</dbReference>
<dbReference type="InterPro" id="IPR025501">
    <property type="entry name" value="MinD_FleN"/>
</dbReference>
<dbReference type="InterPro" id="IPR027417">
    <property type="entry name" value="P-loop_NTPase"/>
</dbReference>
<dbReference type="InterPro" id="IPR050625">
    <property type="entry name" value="ParA/MinD_ATPase"/>
</dbReference>
<dbReference type="NCBIfam" id="TIGR01968">
    <property type="entry name" value="minD_bact"/>
    <property type="match status" value="1"/>
</dbReference>
<dbReference type="PANTHER" id="PTHR43384:SF6">
    <property type="entry name" value="SEPTUM SITE-DETERMINING PROTEIN MIND HOMOLOG, CHLOROPLASTIC"/>
    <property type="match status" value="1"/>
</dbReference>
<dbReference type="PANTHER" id="PTHR43384">
    <property type="entry name" value="SEPTUM SITE-DETERMINING PROTEIN MIND HOMOLOG, CHLOROPLASTIC-RELATED"/>
    <property type="match status" value="1"/>
</dbReference>
<dbReference type="Pfam" id="PF01656">
    <property type="entry name" value="CbiA"/>
    <property type="match status" value="1"/>
</dbReference>
<dbReference type="PIRSF" id="PIRSF003092">
    <property type="entry name" value="MinD"/>
    <property type="match status" value="1"/>
</dbReference>
<dbReference type="SUPFAM" id="SSF52540">
    <property type="entry name" value="P-loop containing nucleoside triphosphate hydrolases"/>
    <property type="match status" value="1"/>
</dbReference>
<protein>
    <recommendedName>
        <fullName>Putative septum site-determining protein MinD</fullName>
    </recommendedName>
</protein>
<feature type="chain" id="PRO_0000201976" description="Putative septum site-determining protein MinD">
    <location>
        <begin position="1"/>
        <end position="282"/>
    </location>
</feature>
<feature type="binding site" evidence="2">
    <location>
        <begin position="25"/>
        <end position="32"/>
    </location>
    <ligand>
        <name>ATP</name>
        <dbReference type="ChEBI" id="CHEBI:30616"/>
    </ligand>
</feature>
<organism>
    <name type="scientific">Chlorella vulgaris</name>
    <name type="common">Green alga</name>
    <dbReference type="NCBI Taxonomy" id="3077"/>
    <lineage>
        <taxon>Eukaryota</taxon>
        <taxon>Viridiplantae</taxon>
        <taxon>Chlorophyta</taxon>
        <taxon>core chlorophytes</taxon>
        <taxon>Trebouxiophyceae</taxon>
        <taxon>Chlorellales</taxon>
        <taxon>Chlorellaceae</taxon>
        <taxon>Chlorella clade</taxon>
        <taxon>Chlorella</taxon>
    </lineage>
</organism>
<keyword id="KW-0067">ATP-binding</keyword>
<keyword id="KW-0131">Cell cycle</keyword>
<keyword id="KW-0132">Cell division</keyword>
<keyword id="KW-0150">Chloroplast</keyword>
<keyword id="KW-0547">Nucleotide-binding</keyword>
<keyword id="KW-0934">Plastid</keyword>
<keyword id="KW-0717">Septation</keyword>
<sequence>MVFSTGNGDDNSKGLERVIVITSGKGGVGKTTTTANLGMSIARLGYRVALIDADIGLRNLDLLLGLENRVLYTAMDIVEGQCRLDQALIRDKRWKNLALLAISKNRQKYNVTRKNMQNLIDSVKELGFQFVLIDCPAGIDVGFINAIASAQEAVIVTTPEITAIRDADRVAGLLEANGIYNVKLLVNRVRPDMIQKNDMMSVRDVQEMLGIPLLGAIPEDTSVIISTNKGEPLVLNKKLTLSGIAFENAARRLIGKQDYFIDLTSPQKGMFQKLQEFFLGEE</sequence>
<evidence type="ECO:0000250" key="1"/>
<evidence type="ECO:0000250" key="2">
    <source>
        <dbReference type="UniProtKB" id="Q72H90"/>
    </source>
</evidence>
<evidence type="ECO:0000305" key="3"/>
<comment type="function">
    <text evidence="1">ATPase required for the correct placement of the division site.</text>
</comment>
<comment type="subcellular location">
    <subcellularLocation>
        <location>Plastid</location>
        <location>Chloroplast</location>
    </subcellularLocation>
</comment>
<comment type="similarity">
    <text evidence="3">Belongs to the ParA family. MinD subfamily.</text>
</comment>
<gene>
    <name type="primary">minD</name>
</gene>
<proteinExistence type="inferred from homology"/>
<accession>P56346</accession>